<organism>
    <name type="scientific">Escherichia coli O157:H7</name>
    <dbReference type="NCBI Taxonomy" id="83334"/>
    <lineage>
        <taxon>Bacteria</taxon>
        <taxon>Pseudomonadati</taxon>
        <taxon>Pseudomonadota</taxon>
        <taxon>Gammaproteobacteria</taxon>
        <taxon>Enterobacterales</taxon>
        <taxon>Enterobacteriaceae</taxon>
        <taxon>Escherichia</taxon>
    </lineage>
</organism>
<sequence length="346" mass="37201">MKKTAIAIAVALAGFATVAQAAPKDNTWYTGAKLGWSQYHDTGFINNNGPTHENQLGAGAFGGYQVNPYVGFEMGYDWLGRMPYKGSVENGAYKAQGVQLTAKLGYPITDDLDIYTRLGGMVWRADTKSNVYGKNHDTGVSPVFAGGVEYAITPEIATRLEYQWTNNIGDAHTIGTRPDNGMLSLGVSYRFGQGEAAPVVAPAPAPAPEVQTKHFTLKSDVLFNFNKATLKPEGQAALDQLYSQLSNLDPKDGSVVVLGYTDRIGSDAYNQGLSERRAQSVVDYLISKGIPADKISARGMGESNPVTGNTCDNVKQRAALIDCLAPDRRVEIEVKGIKDVVTQPQA</sequence>
<proteinExistence type="inferred from homology"/>
<accession>P0A911</accession>
<accession>P02934</accession>
<reference key="1">
    <citation type="journal article" date="2001" name="Nature">
        <title>Genome sequence of enterohaemorrhagic Escherichia coli O157:H7.</title>
        <authorList>
            <person name="Perna N.T."/>
            <person name="Plunkett G. III"/>
            <person name="Burland V."/>
            <person name="Mau B."/>
            <person name="Glasner J.D."/>
            <person name="Rose D.J."/>
            <person name="Mayhew G.F."/>
            <person name="Evans P.S."/>
            <person name="Gregor J."/>
            <person name="Kirkpatrick H.A."/>
            <person name="Posfai G."/>
            <person name="Hackett J."/>
            <person name="Klink S."/>
            <person name="Boutin A."/>
            <person name="Shao Y."/>
            <person name="Miller L."/>
            <person name="Grotbeck E.J."/>
            <person name="Davis N.W."/>
            <person name="Lim A."/>
            <person name="Dimalanta E.T."/>
            <person name="Potamousis K."/>
            <person name="Apodaca J."/>
            <person name="Anantharaman T.S."/>
            <person name="Lin J."/>
            <person name="Yen G."/>
            <person name="Schwartz D.C."/>
            <person name="Welch R.A."/>
            <person name="Blattner F.R."/>
        </authorList>
    </citation>
    <scope>NUCLEOTIDE SEQUENCE [LARGE SCALE GENOMIC DNA]</scope>
    <source>
        <strain>O157:H7 / EDL933 / ATCC 700927 / EHEC</strain>
    </source>
</reference>
<reference key="2">
    <citation type="journal article" date="2001" name="DNA Res.">
        <title>Complete genome sequence of enterohemorrhagic Escherichia coli O157:H7 and genomic comparison with a laboratory strain K-12.</title>
        <authorList>
            <person name="Hayashi T."/>
            <person name="Makino K."/>
            <person name="Ohnishi M."/>
            <person name="Kurokawa K."/>
            <person name="Ishii K."/>
            <person name="Yokoyama K."/>
            <person name="Han C.-G."/>
            <person name="Ohtsubo E."/>
            <person name="Nakayama K."/>
            <person name="Murata T."/>
            <person name="Tanaka M."/>
            <person name="Tobe T."/>
            <person name="Iida T."/>
            <person name="Takami H."/>
            <person name="Honda T."/>
            <person name="Sasakawa C."/>
            <person name="Ogasawara N."/>
            <person name="Yasunaga T."/>
            <person name="Kuhara S."/>
            <person name="Shiba T."/>
            <person name="Hattori M."/>
            <person name="Shinagawa H."/>
        </authorList>
    </citation>
    <scope>NUCLEOTIDE SEQUENCE [LARGE SCALE GENOMIC DNA]</scope>
    <source>
        <strain>O157:H7 / Sakai / RIMD 0509952 / EHEC</strain>
    </source>
</reference>
<name>OMPA_ECO57</name>
<keyword id="KW-0998">Cell outer membrane</keyword>
<keyword id="KW-0184">Conjugation</keyword>
<keyword id="KW-1015">Disulfide bond</keyword>
<keyword id="KW-0406">Ion transport</keyword>
<keyword id="KW-0472">Membrane</keyword>
<keyword id="KW-0626">Porin</keyword>
<keyword id="KW-1185">Reference proteome</keyword>
<keyword id="KW-0677">Repeat</keyword>
<keyword id="KW-0732">Signal</keyword>
<keyword id="KW-0812">Transmembrane</keyword>
<keyword id="KW-1134">Transmembrane beta strand</keyword>
<keyword id="KW-0813">Transport</keyword>
<feature type="signal peptide" evidence="1">
    <location>
        <begin position="1"/>
        <end position="21"/>
    </location>
</feature>
<feature type="chain" id="PRO_0000020095" description="Outer membrane protein A" evidence="1">
    <location>
        <begin position="22"/>
        <end position="346"/>
    </location>
</feature>
<feature type="transmembrane region" description="Beta stranded" evidence="1">
    <location>
        <begin position="27"/>
        <end position="37"/>
    </location>
</feature>
<feature type="transmembrane region" description="Beta stranded" evidence="1">
    <location>
        <begin position="55"/>
        <end position="66"/>
    </location>
</feature>
<feature type="transmembrane region" description="Beta stranded" evidence="1">
    <location>
        <begin position="70"/>
        <end position="78"/>
    </location>
</feature>
<feature type="transmembrane region" description="Beta stranded" evidence="1">
    <location>
        <begin position="96"/>
        <end position="107"/>
    </location>
</feature>
<feature type="transmembrane region" description="Beta stranded" evidence="1">
    <location>
        <begin position="112"/>
        <end position="120"/>
    </location>
</feature>
<feature type="transmembrane region" description="Beta stranded" evidence="1">
    <location>
        <begin position="142"/>
        <end position="151"/>
    </location>
</feature>
<feature type="transmembrane region" description="Beta stranded" evidence="1">
    <location>
        <begin position="156"/>
        <end position="163"/>
    </location>
</feature>
<feature type="transmembrane region" description="Beta stranded" evidence="1">
    <location>
        <begin position="182"/>
        <end position="190"/>
    </location>
</feature>
<feature type="repeat" description="1">
    <location>
        <begin position="201"/>
        <end position="202"/>
    </location>
</feature>
<feature type="repeat" description="2">
    <location>
        <begin position="203"/>
        <end position="204"/>
    </location>
</feature>
<feature type="repeat" description="3">
    <location>
        <begin position="205"/>
        <end position="206"/>
    </location>
</feature>
<feature type="repeat" description="4">
    <location>
        <begin position="207"/>
        <end position="208"/>
    </location>
</feature>
<feature type="domain" description="OmpA-like" evidence="1">
    <location>
        <begin position="210"/>
        <end position="338"/>
    </location>
</feature>
<feature type="region of interest" description="Hinge-like">
    <location>
        <begin position="197"/>
        <end position="208"/>
    </location>
</feature>
<feature type="region of interest" description="4 X 2 AA tandem repeats of A-P">
    <location>
        <begin position="201"/>
        <end position="208"/>
    </location>
</feature>
<feature type="site" description="Part of salt bridge gating mechanism" evidence="1">
    <location>
        <position position="73"/>
    </location>
</feature>
<feature type="site" description="Part of salt bridge gating mechanism" evidence="1">
    <location>
        <position position="159"/>
    </location>
</feature>
<feature type="disulfide bond" evidence="1">
    <location>
        <begin position="311"/>
        <end position="323"/>
    </location>
</feature>
<gene>
    <name evidence="1" type="primary">ompA</name>
    <name type="ordered locus">Z1307</name>
    <name type="ordered locus">ECs1041</name>
</gene>
<comment type="function">
    <text evidence="1">With TolR probably plays a role in maintaining the position of the peptidoglycan cell wall in the periplasm. Acts as a porin with low permeability that allows slow penetration of small solutes; an internal gate slows down solute passage.</text>
</comment>
<comment type="function">
    <text evidence="1">Required for conjugation with F-type plasmids; probably serves as the mating receptor on recipient cells.</text>
</comment>
<comment type="subunit">
    <text evidence="1">Monomer and homodimer.</text>
</comment>
<comment type="subcellular location">
    <subcellularLocation>
        <location evidence="1">Cell outer membrane</location>
        <topology evidence="1">Multi-pass membrane protein</topology>
    </subcellularLocation>
</comment>
<comment type="domain">
    <text evidence="1">The extracellular loops are most variable in sequence, and in some bacteria confer sensitivity to phage and/or colicins.</text>
</comment>
<comment type="similarity">
    <text evidence="1">Belongs to the outer membrane OOP (TC 1.B.6) superfamily. OmpA family.</text>
</comment>
<evidence type="ECO:0000255" key="1">
    <source>
        <dbReference type="HAMAP-Rule" id="MF_00842"/>
    </source>
</evidence>
<dbReference type="EMBL" id="AE005174">
    <property type="protein sequence ID" value="AAG55443.1"/>
    <property type="molecule type" value="Genomic_DNA"/>
</dbReference>
<dbReference type="EMBL" id="BA000007">
    <property type="protein sequence ID" value="BAB34464.1"/>
    <property type="molecule type" value="Genomic_DNA"/>
</dbReference>
<dbReference type="PIR" id="A90759">
    <property type="entry name" value="A90759"/>
</dbReference>
<dbReference type="PIR" id="G85622">
    <property type="entry name" value="G85622"/>
</dbReference>
<dbReference type="RefSeq" id="NP_309068.1">
    <property type="nucleotide sequence ID" value="NC_002695.1"/>
</dbReference>
<dbReference type="RefSeq" id="WP_000750416.1">
    <property type="nucleotide sequence ID" value="NZ_VOAI01000006.1"/>
</dbReference>
<dbReference type="BMRB" id="P0A911"/>
<dbReference type="SMR" id="P0A911"/>
<dbReference type="STRING" id="155864.Z1307"/>
<dbReference type="GeneID" id="917123"/>
<dbReference type="GeneID" id="93776457"/>
<dbReference type="KEGG" id="ece:Z1307"/>
<dbReference type="KEGG" id="ecs:ECs_1041"/>
<dbReference type="PATRIC" id="fig|386585.9.peg.1165"/>
<dbReference type="eggNOG" id="COG2885">
    <property type="taxonomic scope" value="Bacteria"/>
</dbReference>
<dbReference type="eggNOG" id="COG3637">
    <property type="taxonomic scope" value="Bacteria"/>
</dbReference>
<dbReference type="HOGENOM" id="CLU_031536_0_0_6"/>
<dbReference type="Proteomes" id="UP000000558">
    <property type="component" value="Chromosome"/>
</dbReference>
<dbReference type="Proteomes" id="UP000002519">
    <property type="component" value="Chromosome"/>
</dbReference>
<dbReference type="GO" id="GO:0009279">
    <property type="term" value="C:cell outer membrane"/>
    <property type="evidence" value="ECO:0007669"/>
    <property type="project" value="UniProtKB-SubCell"/>
</dbReference>
<dbReference type="GO" id="GO:0046930">
    <property type="term" value="C:pore complex"/>
    <property type="evidence" value="ECO:0007669"/>
    <property type="project" value="UniProtKB-KW"/>
</dbReference>
<dbReference type="GO" id="GO:0015288">
    <property type="term" value="F:porin activity"/>
    <property type="evidence" value="ECO:0007669"/>
    <property type="project" value="UniProtKB-UniRule"/>
</dbReference>
<dbReference type="GO" id="GO:0034220">
    <property type="term" value="P:monoatomic ion transmembrane transport"/>
    <property type="evidence" value="ECO:0007669"/>
    <property type="project" value="UniProtKB-UniRule"/>
</dbReference>
<dbReference type="CDD" id="cd07185">
    <property type="entry name" value="OmpA_C-like"/>
    <property type="match status" value="1"/>
</dbReference>
<dbReference type="FunFam" id="2.40.160.20:FF:000003">
    <property type="entry name" value="Outer membrane protein A"/>
    <property type="match status" value="1"/>
</dbReference>
<dbReference type="FunFam" id="3.30.1330.60:FF:000004">
    <property type="entry name" value="Outer membrane protein A"/>
    <property type="match status" value="1"/>
</dbReference>
<dbReference type="Gene3D" id="2.40.160.20">
    <property type="match status" value="1"/>
</dbReference>
<dbReference type="Gene3D" id="3.30.1330.60">
    <property type="entry name" value="OmpA-like domain"/>
    <property type="match status" value="1"/>
</dbReference>
<dbReference type="HAMAP" id="MF_00842">
    <property type="entry name" value="OmpA"/>
    <property type="match status" value="1"/>
</dbReference>
<dbReference type="InterPro" id="IPR050330">
    <property type="entry name" value="Bact_OuterMem_StrucFunc"/>
</dbReference>
<dbReference type="InterPro" id="IPR011250">
    <property type="entry name" value="OMP/PagP_b-brl"/>
</dbReference>
<dbReference type="InterPro" id="IPR006664">
    <property type="entry name" value="OMP_bac"/>
</dbReference>
<dbReference type="InterPro" id="IPR002368">
    <property type="entry name" value="OmpA"/>
</dbReference>
<dbReference type="InterPro" id="IPR006665">
    <property type="entry name" value="OmpA-like"/>
</dbReference>
<dbReference type="InterPro" id="IPR006690">
    <property type="entry name" value="OMPA-like_CS"/>
</dbReference>
<dbReference type="InterPro" id="IPR036737">
    <property type="entry name" value="OmpA-like_sf"/>
</dbReference>
<dbReference type="InterPro" id="IPR000498">
    <property type="entry name" value="OmpA-like_TM_dom"/>
</dbReference>
<dbReference type="NCBIfam" id="NF008071">
    <property type="entry name" value="PRK10808.1"/>
    <property type="match status" value="1"/>
</dbReference>
<dbReference type="PANTHER" id="PTHR30329:SF21">
    <property type="entry name" value="LIPOPROTEIN YIAD-RELATED"/>
    <property type="match status" value="1"/>
</dbReference>
<dbReference type="PANTHER" id="PTHR30329">
    <property type="entry name" value="STATOR ELEMENT OF FLAGELLAR MOTOR COMPLEX"/>
    <property type="match status" value="1"/>
</dbReference>
<dbReference type="Pfam" id="PF00691">
    <property type="entry name" value="OmpA"/>
    <property type="match status" value="1"/>
</dbReference>
<dbReference type="Pfam" id="PF01389">
    <property type="entry name" value="OmpA_membrane"/>
    <property type="match status" value="1"/>
</dbReference>
<dbReference type="PRINTS" id="PR01021">
    <property type="entry name" value="OMPADOMAIN"/>
</dbReference>
<dbReference type="PRINTS" id="PR01022">
    <property type="entry name" value="OUTRMMBRANEA"/>
</dbReference>
<dbReference type="SUPFAM" id="SSF56925">
    <property type="entry name" value="OMPA-like"/>
    <property type="match status" value="1"/>
</dbReference>
<dbReference type="SUPFAM" id="SSF103088">
    <property type="entry name" value="OmpA-like"/>
    <property type="match status" value="1"/>
</dbReference>
<dbReference type="PROSITE" id="PS01068">
    <property type="entry name" value="OMPA_1"/>
    <property type="match status" value="1"/>
</dbReference>
<dbReference type="PROSITE" id="PS51123">
    <property type="entry name" value="OMPA_2"/>
    <property type="match status" value="1"/>
</dbReference>
<protein>
    <recommendedName>
        <fullName evidence="1">Outer membrane protein A</fullName>
    </recommendedName>
    <alternativeName>
        <fullName evidence="1">Outer membrane porin A</fullName>
    </alternativeName>
</protein>